<gene>
    <name evidence="1" type="primary">ung</name>
    <name type="ordered locus">MCCL_1843</name>
</gene>
<sequence>MEWEQIFHEIKEKYNFDKMDEILEKAYATQTVYPARENIYNAFKFTPFNDVKVVIIGQDPYHGPNQAHGLAFSVMDGTKLPPSLRNMYKELEDDLNIQRHTGELTGWAYEGVLLLNNVLTVVGGQAHSHKGIGWEQFTTEIVKAVSHYRENVVFILWGAPAQKLESLIDRSKHKVIKSVHPSPLSAYRGFFGSKPYSQTNEYLVAHNKTPIDWGREDIQ</sequence>
<evidence type="ECO:0000255" key="1">
    <source>
        <dbReference type="HAMAP-Rule" id="MF_00148"/>
    </source>
</evidence>
<keyword id="KW-0963">Cytoplasm</keyword>
<keyword id="KW-0227">DNA damage</keyword>
<keyword id="KW-0234">DNA repair</keyword>
<keyword id="KW-0378">Hydrolase</keyword>
<keyword id="KW-1185">Reference proteome</keyword>
<dbReference type="EC" id="3.2.2.27" evidence="1"/>
<dbReference type="EMBL" id="AP009484">
    <property type="protein sequence ID" value="BAH18550.1"/>
    <property type="molecule type" value="Genomic_DNA"/>
</dbReference>
<dbReference type="RefSeq" id="WP_015912342.1">
    <property type="nucleotide sequence ID" value="NC_011999.1"/>
</dbReference>
<dbReference type="SMR" id="B9E8N2"/>
<dbReference type="STRING" id="458233.MCCL_1843"/>
<dbReference type="KEGG" id="mcl:MCCL_1843"/>
<dbReference type="eggNOG" id="COG0692">
    <property type="taxonomic scope" value="Bacteria"/>
</dbReference>
<dbReference type="HOGENOM" id="CLU_032162_3_1_9"/>
<dbReference type="OrthoDB" id="9804372at2"/>
<dbReference type="Proteomes" id="UP000001383">
    <property type="component" value="Chromosome"/>
</dbReference>
<dbReference type="GO" id="GO:0005737">
    <property type="term" value="C:cytoplasm"/>
    <property type="evidence" value="ECO:0007669"/>
    <property type="project" value="UniProtKB-SubCell"/>
</dbReference>
<dbReference type="GO" id="GO:0004844">
    <property type="term" value="F:uracil DNA N-glycosylase activity"/>
    <property type="evidence" value="ECO:0007669"/>
    <property type="project" value="UniProtKB-UniRule"/>
</dbReference>
<dbReference type="GO" id="GO:0097510">
    <property type="term" value="P:base-excision repair, AP site formation via deaminated base removal"/>
    <property type="evidence" value="ECO:0007669"/>
    <property type="project" value="TreeGrafter"/>
</dbReference>
<dbReference type="CDD" id="cd10027">
    <property type="entry name" value="UDG-F1-like"/>
    <property type="match status" value="1"/>
</dbReference>
<dbReference type="FunFam" id="3.40.470.10:FF:000001">
    <property type="entry name" value="Uracil-DNA glycosylase"/>
    <property type="match status" value="1"/>
</dbReference>
<dbReference type="Gene3D" id="3.40.470.10">
    <property type="entry name" value="Uracil-DNA glycosylase-like domain"/>
    <property type="match status" value="1"/>
</dbReference>
<dbReference type="HAMAP" id="MF_00148">
    <property type="entry name" value="UDG"/>
    <property type="match status" value="1"/>
</dbReference>
<dbReference type="InterPro" id="IPR002043">
    <property type="entry name" value="UDG_fam1"/>
</dbReference>
<dbReference type="InterPro" id="IPR018085">
    <property type="entry name" value="Ura-DNA_Glyclase_AS"/>
</dbReference>
<dbReference type="InterPro" id="IPR005122">
    <property type="entry name" value="Uracil-DNA_glycosylase-like"/>
</dbReference>
<dbReference type="InterPro" id="IPR036895">
    <property type="entry name" value="Uracil-DNA_glycosylase-like_sf"/>
</dbReference>
<dbReference type="NCBIfam" id="NF003588">
    <property type="entry name" value="PRK05254.1-1"/>
    <property type="match status" value="1"/>
</dbReference>
<dbReference type="NCBIfam" id="NF003589">
    <property type="entry name" value="PRK05254.1-2"/>
    <property type="match status" value="1"/>
</dbReference>
<dbReference type="NCBIfam" id="NF003592">
    <property type="entry name" value="PRK05254.1-5"/>
    <property type="match status" value="1"/>
</dbReference>
<dbReference type="NCBIfam" id="TIGR00628">
    <property type="entry name" value="ung"/>
    <property type="match status" value="1"/>
</dbReference>
<dbReference type="PANTHER" id="PTHR11264">
    <property type="entry name" value="URACIL-DNA GLYCOSYLASE"/>
    <property type="match status" value="1"/>
</dbReference>
<dbReference type="PANTHER" id="PTHR11264:SF0">
    <property type="entry name" value="URACIL-DNA GLYCOSYLASE"/>
    <property type="match status" value="1"/>
</dbReference>
<dbReference type="Pfam" id="PF03167">
    <property type="entry name" value="UDG"/>
    <property type="match status" value="1"/>
</dbReference>
<dbReference type="SMART" id="SM00986">
    <property type="entry name" value="UDG"/>
    <property type="match status" value="1"/>
</dbReference>
<dbReference type="SMART" id="SM00987">
    <property type="entry name" value="UreE_C"/>
    <property type="match status" value="1"/>
</dbReference>
<dbReference type="SUPFAM" id="SSF52141">
    <property type="entry name" value="Uracil-DNA glycosylase-like"/>
    <property type="match status" value="1"/>
</dbReference>
<dbReference type="PROSITE" id="PS00130">
    <property type="entry name" value="U_DNA_GLYCOSYLASE"/>
    <property type="match status" value="1"/>
</dbReference>
<accession>B9E8N2</accession>
<name>UNG_MACCJ</name>
<organism>
    <name type="scientific">Macrococcus caseolyticus (strain JCSC5402)</name>
    <name type="common">Macrococcoides caseolyticum</name>
    <dbReference type="NCBI Taxonomy" id="458233"/>
    <lineage>
        <taxon>Bacteria</taxon>
        <taxon>Bacillati</taxon>
        <taxon>Bacillota</taxon>
        <taxon>Bacilli</taxon>
        <taxon>Bacillales</taxon>
        <taxon>Staphylococcaceae</taxon>
        <taxon>Macrococcoides</taxon>
    </lineage>
</organism>
<proteinExistence type="inferred from homology"/>
<feature type="chain" id="PRO_1000199787" description="Uracil-DNA glycosylase">
    <location>
        <begin position="1"/>
        <end position="219"/>
    </location>
</feature>
<feature type="active site" description="Proton acceptor" evidence="1">
    <location>
        <position position="59"/>
    </location>
</feature>
<protein>
    <recommendedName>
        <fullName evidence="1">Uracil-DNA glycosylase</fullName>
        <shortName evidence="1">UDG</shortName>
        <ecNumber evidence="1">3.2.2.27</ecNumber>
    </recommendedName>
</protein>
<comment type="function">
    <text evidence="1">Excises uracil residues from the DNA which can arise as a result of misincorporation of dUMP residues by DNA polymerase or due to deamination of cytosine.</text>
</comment>
<comment type="catalytic activity">
    <reaction evidence="1">
        <text>Hydrolyzes single-stranded DNA or mismatched double-stranded DNA and polynucleotides, releasing free uracil.</text>
        <dbReference type="EC" id="3.2.2.27"/>
    </reaction>
</comment>
<comment type="subcellular location">
    <subcellularLocation>
        <location evidence="1">Cytoplasm</location>
    </subcellularLocation>
</comment>
<comment type="similarity">
    <text evidence="1">Belongs to the uracil-DNA glycosylase (UDG) superfamily. UNG family.</text>
</comment>
<reference key="1">
    <citation type="journal article" date="2009" name="J. Bacteriol.">
        <title>Complete genome sequence of Macrococcus caseolyticus strain JCSCS5402, reflecting the ancestral genome of the human-pathogenic staphylococci.</title>
        <authorList>
            <person name="Baba T."/>
            <person name="Kuwahara-Arai K."/>
            <person name="Uchiyama I."/>
            <person name="Takeuchi F."/>
            <person name="Ito T."/>
            <person name="Hiramatsu K."/>
        </authorList>
    </citation>
    <scope>NUCLEOTIDE SEQUENCE [LARGE SCALE GENOMIC DNA]</scope>
    <source>
        <strain>JCSC5402</strain>
    </source>
</reference>